<gene>
    <name evidence="1" type="primary">aroA</name>
    <name type="ordered locus">Adeh_0184</name>
</gene>
<evidence type="ECO:0000255" key="1">
    <source>
        <dbReference type="HAMAP-Rule" id="MF_00210"/>
    </source>
</evidence>
<protein>
    <recommendedName>
        <fullName evidence="1">3-phosphoshikimate 1-carboxyvinyltransferase</fullName>
        <ecNumber evidence="1">2.5.1.19</ecNumber>
    </recommendedName>
    <alternativeName>
        <fullName evidence="1">5-enolpyruvylshikimate-3-phosphate synthase</fullName>
        <shortName evidence="1">EPSP synthase</shortName>
        <shortName evidence="1">EPSPS</shortName>
    </alternativeName>
</protein>
<organism>
    <name type="scientific">Anaeromyxobacter dehalogenans (strain 2CP-C)</name>
    <dbReference type="NCBI Taxonomy" id="290397"/>
    <lineage>
        <taxon>Bacteria</taxon>
        <taxon>Pseudomonadati</taxon>
        <taxon>Myxococcota</taxon>
        <taxon>Myxococcia</taxon>
        <taxon>Myxococcales</taxon>
        <taxon>Cystobacterineae</taxon>
        <taxon>Anaeromyxobacteraceae</taxon>
        <taxon>Anaeromyxobacter</taxon>
    </lineage>
</organism>
<proteinExistence type="inferred from homology"/>
<keyword id="KW-0028">Amino-acid biosynthesis</keyword>
<keyword id="KW-0057">Aromatic amino acid biosynthesis</keyword>
<keyword id="KW-0963">Cytoplasm</keyword>
<keyword id="KW-1185">Reference proteome</keyword>
<keyword id="KW-0808">Transferase</keyword>
<sequence length="440" mass="46088">MSAAPTSGPLTCRRAGPLRGAIEVPGDKSISHRSLLFGALSTGETRVTGLLDAEDVHSTRKAVEALGAIVREEGGEVVVTPPATLREPGDVIDCGNSGTSLRLLTGVLSGVPGLSVLTGDASLRRRPVRRVIDPLRAMGANLSARDGDRLPPVVVRGGPLRGARQVLPVASAQVKSAILLAGLFAEGETTVVEPEKSRDHTERMLRGMGVPVKVSGLEVSVSAARPAGGRVDVPGDISSAAFFLCGAAALPGSEVTVRNLGVNETRTGLLDVLRAMGADVWLANLREVAGEPRADVTVRADRLEATEIRGATIPRLIDELPVVMVMATQARGRTVIRDAKELRVKESDRLAAMGETLARAGARIELYEDGCAIEGPTPLRGVEVRTRLDHRIAMSMAVAQLFCGGEPVVLDDVACVATSFPSFFRLLDQVAARVSVGGAP</sequence>
<feature type="chain" id="PRO_0000325329" description="3-phosphoshikimate 1-carboxyvinyltransferase">
    <location>
        <begin position="1"/>
        <end position="440"/>
    </location>
</feature>
<feature type="active site" description="Proton acceptor" evidence="1">
    <location>
        <position position="318"/>
    </location>
</feature>
<feature type="binding site" evidence="1">
    <location>
        <position position="28"/>
    </location>
    <ligand>
        <name>3-phosphoshikimate</name>
        <dbReference type="ChEBI" id="CHEBI:145989"/>
    </ligand>
</feature>
<feature type="binding site" evidence="1">
    <location>
        <position position="28"/>
    </location>
    <ligand>
        <name>phosphoenolpyruvate</name>
        <dbReference type="ChEBI" id="CHEBI:58702"/>
    </ligand>
</feature>
<feature type="binding site" evidence="1">
    <location>
        <position position="29"/>
    </location>
    <ligand>
        <name>3-phosphoshikimate</name>
        <dbReference type="ChEBI" id="CHEBI:145989"/>
    </ligand>
</feature>
<feature type="binding site" evidence="1">
    <location>
        <position position="33"/>
    </location>
    <ligand>
        <name>3-phosphoshikimate</name>
        <dbReference type="ChEBI" id="CHEBI:145989"/>
    </ligand>
</feature>
<feature type="binding site" evidence="1">
    <location>
        <position position="98"/>
    </location>
    <ligand>
        <name>phosphoenolpyruvate</name>
        <dbReference type="ChEBI" id="CHEBI:58702"/>
    </ligand>
</feature>
<feature type="binding site" evidence="1">
    <location>
        <position position="126"/>
    </location>
    <ligand>
        <name>phosphoenolpyruvate</name>
        <dbReference type="ChEBI" id="CHEBI:58702"/>
    </ligand>
</feature>
<feature type="binding site" evidence="1">
    <location>
        <position position="171"/>
    </location>
    <ligand>
        <name>3-phosphoshikimate</name>
        <dbReference type="ChEBI" id="CHEBI:145989"/>
    </ligand>
</feature>
<feature type="binding site" evidence="1">
    <location>
        <position position="173"/>
    </location>
    <ligand>
        <name>3-phosphoshikimate</name>
        <dbReference type="ChEBI" id="CHEBI:145989"/>
    </ligand>
</feature>
<feature type="binding site" evidence="1">
    <location>
        <position position="173"/>
    </location>
    <ligand>
        <name>phosphoenolpyruvate</name>
        <dbReference type="ChEBI" id="CHEBI:58702"/>
    </ligand>
</feature>
<feature type="binding site" evidence="1">
    <location>
        <position position="318"/>
    </location>
    <ligand>
        <name>3-phosphoshikimate</name>
        <dbReference type="ChEBI" id="CHEBI:145989"/>
    </ligand>
</feature>
<feature type="binding site" evidence="1">
    <location>
        <position position="345"/>
    </location>
    <ligand>
        <name>3-phosphoshikimate</name>
        <dbReference type="ChEBI" id="CHEBI:145989"/>
    </ligand>
</feature>
<feature type="binding site" evidence="1">
    <location>
        <position position="349"/>
    </location>
    <ligand>
        <name>phosphoenolpyruvate</name>
        <dbReference type="ChEBI" id="CHEBI:58702"/>
    </ligand>
</feature>
<feature type="binding site" evidence="1">
    <location>
        <position position="391"/>
    </location>
    <ligand>
        <name>phosphoenolpyruvate</name>
        <dbReference type="ChEBI" id="CHEBI:58702"/>
    </ligand>
</feature>
<dbReference type="EC" id="2.5.1.19" evidence="1"/>
<dbReference type="EMBL" id="CP000251">
    <property type="protein sequence ID" value="ABC79961.1"/>
    <property type="molecule type" value="Genomic_DNA"/>
</dbReference>
<dbReference type="RefSeq" id="WP_011419244.1">
    <property type="nucleotide sequence ID" value="NC_007760.1"/>
</dbReference>
<dbReference type="SMR" id="Q2IMC8"/>
<dbReference type="STRING" id="290397.Adeh_0184"/>
<dbReference type="KEGG" id="ade:Adeh_0184"/>
<dbReference type="eggNOG" id="COG0128">
    <property type="taxonomic scope" value="Bacteria"/>
</dbReference>
<dbReference type="HOGENOM" id="CLU_024321_0_1_7"/>
<dbReference type="OrthoDB" id="9809920at2"/>
<dbReference type="UniPathway" id="UPA00053">
    <property type="reaction ID" value="UER00089"/>
</dbReference>
<dbReference type="Proteomes" id="UP000001935">
    <property type="component" value="Chromosome"/>
</dbReference>
<dbReference type="GO" id="GO:0005737">
    <property type="term" value="C:cytoplasm"/>
    <property type="evidence" value="ECO:0007669"/>
    <property type="project" value="UniProtKB-SubCell"/>
</dbReference>
<dbReference type="GO" id="GO:0003866">
    <property type="term" value="F:3-phosphoshikimate 1-carboxyvinyltransferase activity"/>
    <property type="evidence" value="ECO:0007669"/>
    <property type="project" value="UniProtKB-UniRule"/>
</dbReference>
<dbReference type="GO" id="GO:0008652">
    <property type="term" value="P:amino acid biosynthetic process"/>
    <property type="evidence" value="ECO:0007669"/>
    <property type="project" value="UniProtKB-KW"/>
</dbReference>
<dbReference type="GO" id="GO:0009073">
    <property type="term" value="P:aromatic amino acid family biosynthetic process"/>
    <property type="evidence" value="ECO:0007669"/>
    <property type="project" value="UniProtKB-KW"/>
</dbReference>
<dbReference type="GO" id="GO:0009423">
    <property type="term" value="P:chorismate biosynthetic process"/>
    <property type="evidence" value="ECO:0007669"/>
    <property type="project" value="UniProtKB-UniRule"/>
</dbReference>
<dbReference type="CDD" id="cd01556">
    <property type="entry name" value="EPSP_synthase"/>
    <property type="match status" value="1"/>
</dbReference>
<dbReference type="FunFam" id="3.65.10.10:FF:000005">
    <property type="entry name" value="3-phosphoshikimate 1-carboxyvinyltransferase"/>
    <property type="match status" value="1"/>
</dbReference>
<dbReference type="Gene3D" id="3.65.10.10">
    <property type="entry name" value="Enolpyruvate transferase domain"/>
    <property type="match status" value="2"/>
</dbReference>
<dbReference type="HAMAP" id="MF_00210">
    <property type="entry name" value="EPSP_synth"/>
    <property type="match status" value="1"/>
</dbReference>
<dbReference type="InterPro" id="IPR001986">
    <property type="entry name" value="Enolpyruvate_Tfrase_dom"/>
</dbReference>
<dbReference type="InterPro" id="IPR036968">
    <property type="entry name" value="Enolpyruvate_Tfrase_sf"/>
</dbReference>
<dbReference type="InterPro" id="IPR006264">
    <property type="entry name" value="EPSP_synthase"/>
</dbReference>
<dbReference type="InterPro" id="IPR023193">
    <property type="entry name" value="EPSP_synthase_CS"/>
</dbReference>
<dbReference type="InterPro" id="IPR013792">
    <property type="entry name" value="RNA3'P_cycl/enolpyr_Trfase_a/b"/>
</dbReference>
<dbReference type="NCBIfam" id="TIGR01356">
    <property type="entry name" value="aroA"/>
    <property type="match status" value="1"/>
</dbReference>
<dbReference type="PANTHER" id="PTHR21090">
    <property type="entry name" value="AROM/DEHYDROQUINATE SYNTHASE"/>
    <property type="match status" value="1"/>
</dbReference>
<dbReference type="PANTHER" id="PTHR21090:SF5">
    <property type="entry name" value="PENTAFUNCTIONAL AROM POLYPEPTIDE"/>
    <property type="match status" value="1"/>
</dbReference>
<dbReference type="Pfam" id="PF00275">
    <property type="entry name" value="EPSP_synthase"/>
    <property type="match status" value="1"/>
</dbReference>
<dbReference type="PIRSF" id="PIRSF000505">
    <property type="entry name" value="EPSPS"/>
    <property type="match status" value="1"/>
</dbReference>
<dbReference type="SUPFAM" id="SSF55205">
    <property type="entry name" value="EPT/RTPC-like"/>
    <property type="match status" value="1"/>
</dbReference>
<dbReference type="PROSITE" id="PS00104">
    <property type="entry name" value="EPSP_SYNTHASE_1"/>
    <property type="match status" value="1"/>
</dbReference>
<dbReference type="PROSITE" id="PS00885">
    <property type="entry name" value="EPSP_SYNTHASE_2"/>
    <property type="match status" value="1"/>
</dbReference>
<comment type="function">
    <text evidence="1">Catalyzes the transfer of the enolpyruvyl moiety of phosphoenolpyruvate (PEP) to the 5-hydroxyl of shikimate-3-phosphate (S3P) to produce enolpyruvyl shikimate-3-phosphate and inorganic phosphate.</text>
</comment>
<comment type="catalytic activity">
    <reaction evidence="1">
        <text>3-phosphoshikimate + phosphoenolpyruvate = 5-O-(1-carboxyvinyl)-3-phosphoshikimate + phosphate</text>
        <dbReference type="Rhea" id="RHEA:21256"/>
        <dbReference type="ChEBI" id="CHEBI:43474"/>
        <dbReference type="ChEBI" id="CHEBI:57701"/>
        <dbReference type="ChEBI" id="CHEBI:58702"/>
        <dbReference type="ChEBI" id="CHEBI:145989"/>
        <dbReference type="EC" id="2.5.1.19"/>
    </reaction>
    <physiologicalReaction direction="left-to-right" evidence="1">
        <dbReference type="Rhea" id="RHEA:21257"/>
    </physiologicalReaction>
</comment>
<comment type="pathway">
    <text evidence="1">Metabolic intermediate biosynthesis; chorismate biosynthesis; chorismate from D-erythrose 4-phosphate and phosphoenolpyruvate: step 6/7.</text>
</comment>
<comment type="subunit">
    <text evidence="1">Monomer.</text>
</comment>
<comment type="subcellular location">
    <subcellularLocation>
        <location evidence="1">Cytoplasm</location>
    </subcellularLocation>
</comment>
<comment type="similarity">
    <text evidence="1">Belongs to the EPSP synthase family.</text>
</comment>
<reference key="1">
    <citation type="submission" date="2006-01" db="EMBL/GenBank/DDBJ databases">
        <title>Complete sequence of Anaeromyxobacter dehalogenans 2CP-C.</title>
        <authorList>
            <person name="Copeland A."/>
            <person name="Lucas S."/>
            <person name="Lapidus A."/>
            <person name="Barry K."/>
            <person name="Detter J.C."/>
            <person name="Glavina T."/>
            <person name="Hammon N."/>
            <person name="Israni S."/>
            <person name="Pitluck S."/>
            <person name="Brettin T."/>
            <person name="Bruce D."/>
            <person name="Han C."/>
            <person name="Tapia R."/>
            <person name="Gilna P."/>
            <person name="Kiss H."/>
            <person name="Schmutz J."/>
            <person name="Larimer F."/>
            <person name="Land M."/>
            <person name="Kyrpides N."/>
            <person name="Anderson I."/>
            <person name="Sanford R.A."/>
            <person name="Ritalahti K.M."/>
            <person name="Thomas H.S."/>
            <person name="Kirby J.R."/>
            <person name="Zhulin I.B."/>
            <person name="Loeffler F.E."/>
            <person name="Richardson P."/>
        </authorList>
    </citation>
    <scope>NUCLEOTIDE SEQUENCE [LARGE SCALE GENOMIC DNA]</scope>
    <source>
        <strain>2CP-C</strain>
    </source>
</reference>
<name>AROA_ANADE</name>
<accession>Q2IMC8</accession>